<feature type="chain" id="PRO_0000307823" description="E3 ubiquitin ligase TRIM40">
    <location>
        <begin position="1"/>
        <end position="246"/>
    </location>
</feature>
<feature type="zinc finger region" description="RING-type" evidence="5">
    <location>
        <begin position="12"/>
        <end position="55"/>
    </location>
</feature>
<feature type="zinc finger region" description="B box-type" evidence="4">
    <location>
        <begin position="64"/>
        <end position="105"/>
    </location>
</feature>
<feature type="coiled-coil region" evidence="3">
    <location>
        <begin position="105"/>
        <end position="170"/>
    </location>
</feature>
<feature type="binding site" evidence="4">
    <location>
        <position position="69"/>
    </location>
    <ligand>
        <name>Zn(2+)</name>
        <dbReference type="ChEBI" id="CHEBI:29105"/>
    </ligand>
</feature>
<feature type="binding site" evidence="4">
    <location>
        <position position="72"/>
    </location>
    <ligand>
        <name>Zn(2+)</name>
        <dbReference type="ChEBI" id="CHEBI:29105"/>
    </ligand>
</feature>
<feature type="binding site" evidence="4">
    <location>
        <position position="91"/>
    </location>
    <ligand>
        <name>Zn(2+)</name>
        <dbReference type="ChEBI" id="CHEBI:29105"/>
    </ligand>
</feature>
<feature type="binding site" evidence="4">
    <location>
        <position position="97"/>
    </location>
    <ligand>
        <name>Zn(2+)</name>
        <dbReference type="ChEBI" id="CHEBI:29105"/>
    </ligand>
</feature>
<sequence>MGSLDKDNQDICPICLDPLKEAVSTDCRHLFCRMCLTQHMDKASVSGILSCPVCRKPCSEGVLGDNYICHTHQKRVRRFCEASGHLLCEECLQSPEHQSHTELSIENAISHYKERLNRRSRKLRKDLGNLQQLKAQEKKMLQALQVDCECHRLRTDLQNQDQTKEQLKALPWHWLDQEDLPEEVAKIFSFSEAVTQLSILVSGLERMAKDLDASTLKDASDLLDRSAPQKLEGLLSRVSPAGPKLS</sequence>
<name>TRI40_MOUSE</name>
<reference key="1">
    <citation type="journal article" date="2005" name="Science">
        <title>The transcriptional landscape of the mammalian genome.</title>
        <authorList>
            <person name="Carninci P."/>
            <person name="Kasukawa T."/>
            <person name="Katayama S."/>
            <person name="Gough J."/>
            <person name="Frith M.C."/>
            <person name="Maeda N."/>
            <person name="Oyama R."/>
            <person name="Ravasi T."/>
            <person name="Lenhard B."/>
            <person name="Wells C."/>
            <person name="Kodzius R."/>
            <person name="Shimokawa K."/>
            <person name="Bajic V.B."/>
            <person name="Brenner S.E."/>
            <person name="Batalov S."/>
            <person name="Forrest A.R."/>
            <person name="Zavolan M."/>
            <person name="Davis M.J."/>
            <person name="Wilming L.G."/>
            <person name="Aidinis V."/>
            <person name="Allen J.E."/>
            <person name="Ambesi-Impiombato A."/>
            <person name="Apweiler R."/>
            <person name="Aturaliya R.N."/>
            <person name="Bailey T.L."/>
            <person name="Bansal M."/>
            <person name="Baxter L."/>
            <person name="Beisel K.W."/>
            <person name="Bersano T."/>
            <person name="Bono H."/>
            <person name="Chalk A.M."/>
            <person name="Chiu K.P."/>
            <person name="Choudhary V."/>
            <person name="Christoffels A."/>
            <person name="Clutterbuck D.R."/>
            <person name="Crowe M.L."/>
            <person name="Dalla E."/>
            <person name="Dalrymple B.P."/>
            <person name="de Bono B."/>
            <person name="Della Gatta G."/>
            <person name="di Bernardo D."/>
            <person name="Down T."/>
            <person name="Engstrom P."/>
            <person name="Fagiolini M."/>
            <person name="Faulkner G."/>
            <person name="Fletcher C.F."/>
            <person name="Fukushima T."/>
            <person name="Furuno M."/>
            <person name="Futaki S."/>
            <person name="Gariboldi M."/>
            <person name="Georgii-Hemming P."/>
            <person name="Gingeras T.R."/>
            <person name="Gojobori T."/>
            <person name="Green R.E."/>
            <person name="Gustincich S."/>
            <person name="Harbers M."/>
            <person name="Hayashi Y."/>
            <person name="Hensch T.K."/>
            <person name="Hirokawa N."/>
            <person name="Hill D."/>
            <person name="Huminiecki L."/>
            <person name="Iacono M."/>
            <person name="Ikeo K."/>
            <person name="Iwama A."/>
            <person name="Ishikawa T."/>
            <person name="Jakt M."/>
            <person name="Kanapin A."/>
            <person name="Katoh M."/>
            <person name="Kawasawa Y."/>
            <person name="Kelso J."/>
            <person name="Kitamura H."/>
            <person name="Kitano H."/>
            <person name="Kollias G."/>
            <person name="Krishnan S.P."/>
            <person name="Kruger A."/>
            <person name="Kummerfeld S.K."/>
            <person name="Kurochkin I.V."/>
            <person name="Lareau L.F."/>
            <person name="Lazarevic D."/>
            <person name="Lipovich L."/>
            <person name="Liu J."/>
            <person name="Liuni S."/>
            <person name="McWilliam S."/>
            <person name="Madan Babu M."/>
            <person name="Madera M."/>
            <person name="Marchionni L."/>
            <person name="Matsuda H."/>
            <person name="Matsuzawa S."/>
            <person name="Miki H."/>
            <person name="Mignone F."/>
            <person name="Miyake S."/>
            <person name="Morris K."/>
            <person name="Mottagui-Tabar S."/>
            <person name="Mulder N."/>
            <person name="Nakano N."/>
            <person name="Nakauchi H."/>
            <person name="Ng P."/>
            <person name="Nilsson R."/>
            <person name="Nishiguchi S."/>
            <person name="Nishikawa S."/>
            <person name="Nori F."/>
            <person name="Ohara O."/>
            <person name="Okazaki Y."/>
            <person name="Orlando V."/>
            <person name="Pang K.C."/>
            <person name="Pavan W.J."/>
            <person name="Pavesi G."/>
            <person name="Pesole G."/>
            <person name="Petrovsky N."/>
            <person name="Piazza S."/>
            <person name="Reed J."/>
            <person name="Reid J.F."/>
            <person name="Ring B.Z."/>
            <person name="Ringwald M."/>
            <person name="Rost B."/>
            <person name="Ruan Y."/>
            <person name="Salzberg S.L."/>
            <person name="Sandelin A."/>
            <person name="Schneider C."/>
            <person name="Schoenbach C."/>
            <person name="Sekiguchi K."/>
            <person name="Semple C.A."/>
            <person name="Seno S."/>
            <person name="Sessa L."/>
            <person name="Sheng Y."/>
            <person name="Shibata Y."/>
            <person name="Shimada H."/>
            <person name="Shimada K."/>
            <person name="Silva D."/>
            <person name="Sinclair B."/>
            <person name="Sperling S."/>
            <person name="Stupka E."/>
            <person name="Sugiura K."/>
            <person name="Sultana R."/>
            <person name="Takenaka Y."/>
            <person name="Taki K."/>
            <person name="Tammoja K."/>
            <person name="Tan S.L."/>
            <person name="Tang S."/>
            <person name="Taylor M.S."/>
            <person name="Tegner J."/>
            <person name="Teichmann S.A."/>
            <person name="Ueda H.R."/>
            <person name="van Nimwegen E."/>
            <person name="Verardo R."/>
            <person name="Wei C.L."/>
            <person name="Yagi K."/>
            <person name="Yamanishi H."/>
            <person name="Zabarovsky E."/>
            <person name="Zhu S."/>
            <person name="Zimmer A."/>
            <person name="Hide W."/>
            <person name="Bult C."/>
            <person name="Grimmond S.M."/>
            <person name="Teasdale R.D."/>
            <person name="Liu E.T."/>
            <person name="Brusic V."/>
            <person name="Quackenbush J."/>
            <person name="Wahlestedt C."/>
            <person name="Mattick J.S."/>
            <person name="Hume D.A."/>
            <person name="Kai C."/>
            <person name="Sasaki D."/>
            <person name="Tomaru Y."/>
            <person name="Fukuda S."/>
            <person name="Kanamori-Katayama M."/>
            <person name="Suzuki M."/>
            <person name="Aoki J."/>
            <person name="Arakawa T."/>
            <person name="Iida J."/>
            <person name="Imamura K."/>
            <person name="Itoh M."/>
            <person name="Kato T."/>
            <person name="Kawaji H."/>
            <person name="Kawagashira N."/>
            <person name="Kawashima T."/>
            <person name="Kojima M."/>
            <person name="Kondo S."/>
            <person name="Konno H."/>
            <person name="Nakano K."/>
            <person name="Ninomiya N."/>
            <person name="Nishio T."/>
            <person name="Okada M."/>
            <person name="Plessy C."/>
            <person name="Shibata K."/>
            <person name="Shiraki T."/>
            <person name="Suzuki S."/>
            <person name="Tagami M."/>
            <person name="Waki K."/>
            <person name="Watahiki A."/>
            <person name="Okamura-Oho Y."/>
            <person name="Suzuki H."/>
            <person name="Kawai J."/>
            <person name="Hayashizaki Y."/>
        </authorList>
    </citation>
    <scope>NUCLEOTIDE SEQUENCE [LARGE SCALE MRNA]</scope>
    <source>
        <strain>C57BL/6J</strain>
        <tissue>Cecum</tissue>
    </source>
</reference>
<reference key="2">
    <citation type="journal article" date="2004" name="Genome Res.">
        <title>The status, quality, and expansion of the NIH full-length cDNA project: the Mammalian Gene Collection (MGC).</title>
        <authorList>
            <consortium name="The MGC Project Team"/>
        </authorList>
    </citation>
    <scope>NUCLEOTIDE SEQUENCE [LARGE SCALE MRNA]</scope>
    <source>
        <tissue>Brain</tissue>
    </source>
</reference>
<reference key="3">
    <citation type="journal article" date="2017" name="Cell Rep.">
        <title>The E3 Ubiquitin Ligase TRIM40 Attenuates Antiviral Immune Responses by Targeting MDA5 and RIG-I.</title>
        <authorList>
            <person name="Zhao C."/>
            <person name="Jia M."/>
            <person name="Song H."/>
            <person name="Yu Z."/>
            <person name="Wang W."/>
            <person name="Li Q."/>
            <person name="Zhang L."/>
            <person name="Zhao W."/>
            <person name="Cao X."/>
        </authorList>
    </citation>
    <scope>DISRUPTION PHENOTYPE</scope>
</reference>
<gene>
    <name type="primary">Trim40</name>
    <name type="synonym">Gm319</name>
</gene>
<organism>
    <name type="scientific">Mus musculus</name>
    <name type="common">Mouse</name>
    <dbReference type="NCBI Taxonomy" id="10090"/>
    <lineage>
        <taxon>Eukaryota</taxon>
        <taxon>Metazoa</taxon>
        <taxon>Chordata</taxon>
        <taxon>Craniata</taxon>
        <taxon>Vertebrata</taxon>
        <taxon>Euteleostomi</taxon>
        <taxon>Mammalia</taxon>
        <taxon>Eutheria</taxon>
        <taxon>Euarchontoglires</taxon>
        <taxon>Glires</taxon>
        <taxon>Rodentia</taxon>
        <taxon>Myomorpha</taxon>
        <taxon>Muroidea</taxon>
        <taxon>Muridae</taxon>
        <taxon>Murinae</taxon>
        <taxon>Mus</taxon>
        <taxon>Mus</taxon>
    </lineage>
</organism>
<evidence type="ECO:0000250" key="1"/>
<evidence type="ECO:0000250" key="2">
    <source>
        <dbReference type="UniProtKB" id="Q6P9F5"/>
    </source>
</evidence>
<evidence type="ECO:0000255" key="3"/>
<evidence type="ECO:0000255" key="4">
    <source>
        <dbReference type="PROSITE-ProRule" id="PRU00024"/>
    </source>
</evidence>
<evidence type="ECO:0000255" key="5">
    <source>
        <dbReference type="PROSITE-ProRule" id="PRU00175"/>
    </source>
</evidence>
<evidence type="ECO:0000269" key="6">
    <source>
    </source>
</evidence>
<evidence type="ECO:0000305" key="7"/>
<comment type="function">
    <text evidence="2">E3 ubiquitin-protein ligase that plays a role in the limitation of the innate immune response. Mediates inhibition of the RLR signaling pathway by ubiquitinating RIGI and IFIH1 receptors, leading to their proteasomal degradation. Also promotes the neddylation of IKBKG/NEMO, stabilizing NFKBIA, and thereby inhibiting of NF-kappa-B nuclear translocation and activation.</text>
</comment>
<comment type="catalytic activity">
    <reaction evidence="2">
        <text>S-ubiquitinyl-[E2 ubiquitin-conjugating enzyme]-L-cysteine + [acceptor protein]-L-lysine = [E2 ubiquitin-conjugating enzyme]-L-cysteine + N(6)-ubiquitinyl-[acceptor protein]-L-lysine.</text>
        <dbReference type="EC" id="2.3.2.27"/>
    </reaction>
</comment>
<comment type="subunit">
    <text evidence="1">Interacts with NEDD8.</text>
</comment>
<comment type="disruption phenotype">
    <text evidence="6">TRIM40 deficiency greatly enhances antiviral immune responses and interferon-beta production and thus inhibits viral replication.</text>
</comment>
<comment type="similarity">
    <text evidence="7">Belongs to the TRIM/RBCC family.</text>
</comment>
<proteinExistence type="evidence at transcript level"/>
<keyword id="KW-0175">Coiled coil</keyword>
<keyword id="KW-0479">Metal-binding</keyword>
<keyword id="KW-1185">Reference proteome</keyword>
<keyword id="KW-0808">Transferase</keyword>
<keyword id="KW-0833">Ubl conjugation pathway</keyword>
<keyword id="KW-0862">Zinc</keyword>
<keyword id="KW-0863">Zinc-finger</keyword>
<protein>
    <recommendedName>
        <fullName>E3 ubiquitin ligase TRIM40</fullName>
        <ecNumber evidence="2">2.3.2.27</ecNumber>
    </recommendedName>
    <alternativeName>
        <fullName>Probable E3 NEDD8-protein ligase</fullName>
    </alternativeName>
</protein>
<accession>Q3UWA4</accession>
<accession>B2RVT3</accession>
<dbReference type="EC" id="2.3.2.27" evidence="2"/>
<dbReference type="EMBL" id="AK136498">
    <property type="protein sequence ID" value="BAE23012.1"/>
    <property type="molecule type" value="mRNA"/>
</dbReference>
<dbReference type="EMBL" id="BC147336">
    <property type="protein sequence ID" value="AAI47337.1"/>
    <property type="molecule type" value="mRNA"/>
</dbReference>
<dbReference type="EMBL" id="BC147337">
    <property type="protein sequence ID" value="AAI47338.1"/>
    <property type="molecule type" value="mRNA"/>
</dbReference>
<dbReference type="CCDS" id="CCDS28727.1"/>
<dbReference type="RefSeq" id="NP_001028407.1">
    <property type="nucleotide sequence ID" value="NM_001033235.3"/>
</dbReference>
<dbReference type="RefSeq" id="XP_017172846.1">
    <property type="nucleotide sequence ID" value="XM_017317357.2"/>
</dbReference>
<dbReference type="SMR" id="Q3UWA4"/>
<dbReference type="BioGRID" id="228835">
    <property type="interactions" value="2"/>
</dbReference>
<dbReference type="FunCoup" id="Q3UWA4">
    <property type="interactions" value="30"/>
</dbReference>
<dbReference type="STRING" id="10090.ENSMUSP00000084400"/>
<dbReference type="iPTMnet" id="Q3UWA4"/>
<dbReference type="PhosphoSitePlus" id="Q3UWA4"/>
<dbReference type="PaxDb" id="10090-ENSMUSP00000084400"/>
<dbReference type="ProteomicsDB" id="298218"/>
<dbReference type="Antibodypedia" id="26227">
    <property type="antibodies" value="87 antibodies from 26 providers"/>
</dbReference>
<dbReference type="Ensembl" id="ENSMUST00000087158.11">
    <property type="protein sequence ID" value="ENSMUSP00000084400.5"/>
    <property type="gene ID" value="ENSMUSG00000073399.10"/>
</dbReference>
<dbReference type="GeneID" id="195359"/>
<dbReference type="KEGG" id="mmu:195359"/>
<dbReference type="UCSC" id="uc008clk.2">
    <property type="organism name" value="mouse"/>
</dbReference>
<dbReference type="AGR" id="MGI:2684881"/>
<dbReference type="CTD" id="135644"/>
<dbReference type="MGI" id="MGI:2684881">
    <property type="gene designation" value="Trim40"/>
</dbReference>
<dbReference type="VEuPathDB" id="HostDB:ENSMUSG00000073399"/>
<dbReference type="eggNOG" id="KOG2177">
    <property type="taxonomic scope" value="Eukaryota"/>
</dbReference>
<dbReference type="GeneTree" id="ENSGT00710000106875"/>
<dbReference type="InParanoid" id="Q3UWA4"/>
<dbReference type="OMA" id="CLESPEH"/>
<dbReference type="OrthoDB" id="654191at2759"/>
<dbReference type="PhylomeDB" id="Q3UWA4"/>
<dbReference type="TreeFam" id="TF333491"/>
<dbReference type="BioGRID-ORCS" id="195359">
    <property type="hits" value="1 hit in 78 CRISPR screens"/>
</dbReference>
<dbReference type="PRO" id="PR:Q3UWA4"/>
<dbReference type="Proteomes" id="UP000000589">
    <property type="component" value="Chromosome 17"/>
</dbReference>
<dbReference type="RNAct" id="Q3UWA4">
    <property type="molecule type" value="protein"/>
</dbReference>
<dbReference type="Bgee" id="ENSMUSG00000073399">
    <property type="expression patterns" value="Expressed in jejunum and 49 other cell types or tissues"/>
</dbReference>
<dbReference type="ExpressionAtlas" id="Q3UWA4">
    <property type="expression patterns" value="baseline and differential"/>
</dbReference>
<dbReference type="GO" id="GO:0008385">
    <property type="term" value="C:IkappaB kinase complex"/>
    <property type="evidence" value="ECO:0007669"/>
    <property type="project" value="Ensembl"/>
</dbReference>
<dbReference type="GO" id="GO:0016740">
    <property type="term" value="F:transferase activity"/>
    <property type="evidence" value="ECO:0007669"/>
    <property type="project" value="UniProtKB-KW"/>
</dbReference>
<dbReference type="GO" id="GO:0008270">
    <property type="term" value="F:zinc ion binding"/>
    <property type="evidence" value="ECO:0007669"/>
    <property type="project" value="UniProtKB-KW"/>
</dbReference>
<dbReference type="GO" id="GO:0030308">
    <property type="term" value="P:negative regulation of cell growth"/>
    <property type="evidence" value="ECO:0007669"/>
    <property type="project" value="Ensembl"/>
</dbReference>
<dbReference type="GO" id="GO:0042177">
    <property type="term" value="P:negative regulation of protein catabolic process"/>
    <property type="evidence" value="ECO:0007669"/>
    <property type="project" value="Ensembl"/>
</dbReference>
<dbReference type="GO" id="GO:1900181">
    <property type="term" value="P:negative regulation of protein localization to nucleus"/>
    <property type="evidence" value="ECO:0007669"/>
    <property type="project" value="Ensembl"/>
</dbReference>
<dbReference type="GO" id="GO:0045116">
    <property type="term" value="P:protein neddylation"/>
    <property type="evidence" value="ECO:0007669"/>
    <property type="project" value="Ensembl"/>
</dbReference>
<dbReference type="CDD" id="cd16583">
    <property type="entry name" value="RING-HC_TRIM40-C-V"/>
    <property type="match status" value="1"/>
</dbReference>
<dbReference type="FunFam" id="3.30.40.10:FF:000775">
    <property type="entry name" value="Tripartite motif-containing protein 40"/>
    <property type="match status" value="1"/>
</dbReference>
<dbReference type="Gene3D" id="3.30.160.60">
    <property type="entry name" value="Classic Zinc Finger"/>
    <property type="match status" value="1"/>
</dbReference>
<dbReference type="Gene3D" id="3.30.40.10">
    <property type="entry name" value="Zinc/RING finger domain, C3HC4 (zinc finger)"/>
    <property type="match status" value="1"/>
</dbReference>
<dbReference type="InterPro" id="IPR050143">
    <property type="entry name" value="TRIM/RBCC"/>
</dbReference>
<dbReference type="InterPro" id="IPR000315">
    <property type="entry name" value="Znf_B-box"/>
</dbReference>
<dbReference type="InterPro" id="IPR018957">
    <property type="entry name" value="Znf_C3HC4_RING-type"/>
</dbReference>
<dbReference type="InterPro" id="IPR001841">
    <property type="entry name" value="Znf_RING"/>
</dbReference>
<dbReference type="InterPro" id="IPR013083">
    <property type="entry name" value="Znf_RING/FYVE/PHD"/>
</dbReference>
<dbReference type="InterPro" id="IPR017907">
    <property type="entry name" value="Znf_RING_CS"/>
</dbReference>
<dbReference type="PANTHER" id="PTHR24103">
    <property type="entry name" value="E3 UBIQUITIN-PROTEIN LIGASE TRIM"/>
    <property type="match status" value="1"/>
</dbReference>
<dbReference type="Pfam" id="PF00097">
    <property type="entry name" value="zf-C3HC4"/>
    <property type="match status" value="1"/>
</dbReference>
<dbReference type="SMART" id="SM00184">
    <property type="entry name" value="RING"/>
    <property type="match status" value="1"/>
</dbReference>
<dbReference type="SUPFAM" id="SSF57845">
    <property type="entry name" value="B-box zinc-binding domain"/>
    <property type="match status" value="1"/>
</dbReference>
<dbReference type="SUPFAM" id="SSF57850">
    <property type="entry name" value="RING/U-box"/>
    <property type="match status" value="1"/>
</dbReference>
<dbReference type="PROSITE" id="PS50119">
    <property type="entry name" value="ZF_BBOX"/>
    <property type="match status" value="1"/>
</dbReference>
<dbReference type="PROSITE" id="PS00518">
    <property type="entry name" value="ZF_RING_1"/>
    <property type="match status" value="1"/>
</dbReference>
<dbReference type="PROSITE" id="PS50089">
    <property type="entry name" value="ZF_RING_2"/>
    <property type="match status" value="1"/>
</dbReference>